<protein>
    <recommendedName>
        <fullName>Choline O-acetyltransferase</fullName>
        <shortName>CHOACTase</shortName>
        <shortName>ChAT</shortName>
        <shortName>Choline acetylase</shortName>
        <ecNumber evidence="8">2.3.1.6</ecNumber>
    </recommendedName>
</protein>
<accession>P28329</accession>
<accession>A2BDF4</accession>
<accession>A2BDF5</accession>
<accession>Q16488</accession>
<accession>Q9BQ23</accession>
<accession>Q9BQ35</accession>
<accession>Q9BQE1</accession>
<keyword id="KW-0002">3D-structure</keyword>
<keyword id="KW-0012">Acyltransferase</keyword>
<keyword id="KW-0025">Alternative splicing</keyword>
<keyword id="KW-1004">Congenital myasthenic syndrome</keyword>
<keyword id="KW-0903">Direct protein sequencing</keyword>
<keyword id="KW-0225">Disease variant</keyword>
<keyword id="KW-0530">Neurotransmitter biosynthesis</keyword>
<keyword id="KW-0597">Phosphoprotein</keyword>
<keyword id="KW-1267">Proteomics identification</keyword>
<keyword id="KW-1185">Reference proteome</keyword>
<keyword id="KW-0808">Transferase</keyword>
<organism>
    <name type="scientific">Homo sapiens</name>
    <name type="common">Human</name>
    <dbReference type="NCBI Taxonomy" id="9606"/>
    <lineage>
        <taxon>Eukaryota</taxon>
        <taxon>Metazoa</taxon>
        <taxon>Chordata</taxon>
        <taxon>Craniata</taxon>
        <taxon>Vertebrata</taxon>
        <taxon>Euteleostomi</taxon>
        <taxon>Mammalia</taxon>
        <taxon>Eutheria</taxon>
        <taxon>Euarchontoglires</taxon>
        <taxon>Primates</taxon>
        <taxon>Haplorrhini</taxon>
        <taxon>Catarrhini</taxon>
        <taxon>Hominidae</taxon>
        <taxon>Homo</taxon>
    </lineage>
</organism>
<reference key="1">
    <citation type="journal article" date="1992" name="Brain Res. Mol. Brain Res.">
        <title>A complementary DNA for human choline acetyltransferase induces two forms of enzyme with different molecular weights in cultured cells.</title>
        <authorList>
            <person name="Oda Y."/>
            <person name="Nakanishi I."/>
            <person name="Deguchi T."/>
        </authorList>
    </citation>
    <scope>NUCLEOTIDE SEQUENCE [MRNA] (ISOFORM M)</scope>
    <scope>VARIANTS GLY-392 AND MET-461</scope>
    <source>
        <tissue>Spinal cord</tissue>
    </source>
</reference>
<reference key="2">
    <citation type="journal article" date="2001" name="Proc. Natl. Acad. Sci. U.S.A.">
        <title>Choline acetyltransferase mutations cause myasthenic syndrome associated with episodic apnea in humans.</title>
        <authorList>
            <person name="Ohno K."/>
            <person name="Tsujino A."/>
            <person name="Brengman J.M."/>
            <person name="Harper C.M."/>
            <person name="Bajzer Z."/>
            <person name="Udd B."/>
            <person name="Beyring R."/>
            <person name="Robb S."/>
            <person name="Kirkham F.J."/>
            <person name="Engel A.G."/>
        </authorList>
    </citation>
    <scope>NUCLEOTIDE SEQUENCE [GENOMIC DNA / MRNA] (ISOFORMS M; R AND S)</scope>
    <scope>ALTERNATIVE SPLICING</scope>
    <scope>VARIANTS CMS6 PRO-210; ALA-211; THR-305; CYS-420; LYS-441; GLY-482; LEU-498; LEU-506 AND HIS-560</scope>
    <scope>VARIANTS THR-120; GLY-392 AND MET-461</scope>
</reference>
<reference key="3">
    <citation type="journal article" date="2004" name="Nature">
        <title>The DNA sequence and comparative analysis of human chromosome 10.</title>
        <authorList>
            <person name="Deloukas P."/>
            <person name="Earthrowl M.E."/>
            <person name="Grafham D.V."/>
            <person name="Rubenfield M."/>
            <person name="French L."/>
            <person name="Steward C.A."/>
            <person name="Sims S.K."/>
            <person name="Jones M.C."/>
            <person name="Searle S."/>
            <person name="Scott C."/>
            <person name="Howe K."/>
            <person name="Hunt S.E."/>
            <person name="Andrews T.D."/>
            <person name="Gilbert J.G.R."/>
            <person name="Swarbreck D."/>
            <person name="Ashurst J.L."/>
            <person name="Taylor A."/>
            <person name="Battles J."/>
            <person name="Bird C.P."/>
            <person name="Ainscough R."/>
            <person name="Almeida J.P."/>
            <person name="Ashwell R.I.S."/>
            <person name="Ambrose K.D."/>
            <person name="Babbage A.K."/>
            <person name="Bagguley C.L."/>
            <person name="Bailey J."/>
            <person name="Banerjee R."/>
            <person name="Bates K."/>
            <person name="Beasley H."/>
            <person name="Bray-Allen S."/>
            <person name="Brown A.J."/>
            <person name="Brown J.Y."/>
            <person name="Burford D.C."/>
            <person name="Burrill W."/>
            <person name="Burton J."/>
            <person name="Cahill P."/>
            <person name="Camire D."/>
            <person name="Carter N.P."/>
            <person name="Chapman J.C."/>
            <person name="Clark S.Y."/>
            <person name="Clarke G."/>
            <person name="Clee C.M."/>
            <person name="Clegg S."/>
            <person name="Corby N."/>
            <person name="Coulson A."/>
            <person name="Dhami P."/>
            <person name="Dutta I."/>
            <person name="Dunn M."/>
            <person name="Faulkner L."/>
            <person name="Frankish A."/>
            <person name="Frankland J.A."/>
            <person name="Garner P."/>
            <person name="Garnett J."/>
            <person name="Gribble S."/>
            <person name="Griffiths C."/>
            <person name="Grocock R."/>
            <person name="Gustafson E."/>
            <person name="Hammond S."/>
            <person name="Harley J.L."/>
            <person name="Hart E."/>
            <person name="Heath P.D."/>
            <person name="Ho T.P."/>
            <person name="Hopkins B."/>
            <person name="Horne J."/>
            <person name="Howden P.J."/>
            <person name="Huckle E."/>
            <person name="Hynds C."/>
            <person name="Johnson C."/>
            <person name="Johnson D."/>
            <person name="Kana A."/>
            <person name="Kay M."/>
            <person name="Kimberley A.M."/>
            <person name="Kershaw J.K."/>
            <person name="Kokkinaki M."/>
            <person name="Laird G.K."/>
            <person name="Lawlor S."/>
            <person name="Lee H.M."/>
            <person name="Leongamornlert D.A."/>
            <person name="Laird G."/>
            <person name="Lloyd C."/>
            <person name="Lloyd D.M."/>
            <person name="Loveland J."/>
            <person name="Lovell J."/>
            <person name="McLaren S."/>
            <person name="McLay K.E."/>
            <person name="McMurray A."/>
            <person name="Mashreghi-Mohammadi M."/>
            <person name="Matthews L."/>
            <person name="Milne S."/>
            <person name="Nickerson T."/>
            <person name="Nguyen M."/>
            <person name="Overton-Larty E."/>
            <person name="Palmer S.A."/>
            <person name="Pearce A.V."/>
            <person name="Peck A.I."/>
            <person name="Pelan S."/>
            <person name="Phillimore B."/>
            <person name="Porter K."/>
            <person name="Rice C.M."/>
            <person name="Rogosin A."/>
            <person name="Ross M.T."/>
            <person name="Sarafidou T."/>
            <person name="Sehra H.K."/>
            <person name="Shownkeen R."/>
            <person name="Skuce C.D."/>
            <person name="Smith M."/>
            <person name="Standring L."/>
            <person name="Sycamore N."/>
            <person name="Tester J."/>
            <person name="Thorpe A."/>
            <person name="Torcasso W."/>
            <person name="Tracey A."/>
            <person name="Tromans A."/>
            <person name="Tsolas J."/>
            <person name="Wall M."/>
            <person name="Walsh J."/>
            <person name="Wang H."/>
            <person name="Weinstock K."/>
            <person name="West A.P."/>
            <person name="Willey D.L."/>
            <person name="Whitehead S.L."/>
            <person name="Wilming L."/>
            <person name="Wray P.W."/>
            <person name="Young L."/>
            <person name="Chen Y."/>
            <person name="Lovering R.C."/>
            <person name="Moschonas N.K."/>
            <person name="Siebert R."/>
            <person name="Fechtel K."/>
            <person name="Bentley D."/>
            <person name="Durbin R.M."/>
            <person name="Hubbard T."/>
            <person name="Doucette-Stamm L."/>
            <person name="Beck S."/>
            <person name="Smith D.R."/>
            <person name="Rogers J."/>
        </authorList>
    </citation>
    <scope>NUCLEOTIDE SEQUENCE [LARGE SCALE GENOMIC DNA]</scope>
</reference>
<reference key="4">
    <citation type="submission" date="2005-09" db="EMBL/GenBank/DDBJ databases">
        <authorList>
            <person name="Mural R.J."/>
            <person name="Istrail S."/>
            <person name="Sutton G.G."/>
            <person name="Florea L."/>
            <person name="Halpern A.L."/>
            <person name="Mobarry C.M."/>
            <person name="Lippert R."/>
            <person name="Walenz B."/>
            <person name="Shatkay H."/>
            <person name="Dew I."/>
            <person name="Miller J.R."/>
            <person name="Flanigan M.J."/>
            <person name="Edwards N.J."/>
            <person name="Bolanos R."/>
            <person name="Fasulo D."/>
            <person name="Halldorsson B.V."/>
            <person name="Hannenhalli S."/>
            <person name="Turner R."/>
            <person name="Yooseph S."/>
            <person name="Lu F."/>
            <person name="Nusskern D.R."/>
            <person name="Shue B.C."/>
            <person name="Zheng X.H."/>
            <person name="Zhong F."/>
            <person name="Delcher A.L."/>
            <person name="Huson D.H."/>
            <person name="Kravitz S.A."/>
            <person name="Mouchard L."/>
            <person name="Reinert K."/>
            <person name="Remington K.A."/>
            <person name="Clark A.G."/>
            <person name="Waterman M.S."/>
            <person name="Eichler E.E."/>
            <person name="Adams M.D."/>
            <person name="Hunkapiller M.W."/>
            <person name="Myers E.W."/>
            <person name="Venter J.C."/>
        </authorList>
    </citation>
    <scope>NUCLEOTIDE SEQUENCE [LARGE SCALE GENOMIC DNA]</scope>
</reference>
<reference key="5">
    <citation type="journal article" date="2004" name="Genome Res.">
        <title>The status, quality, and expansion of the NIH full-length cDNA project: the Mammalian Gene Collection (MGC).</title>
        <authorList>
            <consortium name="The MGC Project Team"/>
        </authorList>
    </citation>
    <scope>NUCLEOTIDE SEQUENCE [LARGE SCALE MRNA] (ISOFORM R)</scope>
    <scope>NUCLEOTIDE SEQUENCE [LARGE SCALE MRNA] OF 108-748 (ISOFORM M)</scope>
    <scope>VARIANTS THR-120 AND MET-461</scope>
</reference>
<reference key="6">
    <citation type="journal article" date="1992" name="DNA Cell Biol.">
        <title>Two mRNAs are transcribed from the human gene for choline acetyltransferase.</title>
        <authorList>
            <person name="Lorenzi M.V."/>
            <person name="Trinidad A.C."/>
            <person name="Zhang R."/>
            <person name="Strauss W.L."/>
        </authorList>
    </citation>
    <scope>NUCLEOTIDE SEQUENCE [MRNA] OF 111-669</scope>
    <scope>VARIANTS THR-120 AND MET-461</scope>
</reference>
<reference key="7">
    <citation type="journal article" date="1992" name="Genomics">
        <title>Human choline acetyltransferase (CHAT): partial gene sequence and potential control regions.</title>
        <authorList>
            <person name="Toussaint J.L."/>
            <person name="Geoffroy V."/>
            <person name="Schmitt M."/>
            <person name="Werner A."/>
            <person name="Garnier J.-M."/>
            <person name="Simoni P."/>
            <person name="Kempf J."/>
        </authorList>
    </citation>
    <scope>NUCLEOTIDE SEQUENCE [GENOMIC DNA] OF 109-232</scope>
</reference>
<reference key="8">
    <citation type="journal article" date="1988" name="J. Neurochem.">
        <title>Conservation of amino acid sequences between human and porcine choline acetyltransferase.</title>
        <authorList>
            <person name="Hersh L.B."/>
            <person name="Takane K."/>
            <person name="Gylys K."/>
            <person name="Moomaw C."/>
            <person name="Slaughter C."/>
        </authorList>
    </citation>
    <scope>PROTEIN SEQUENCE OF 161-182; 271-295; 340-352; 376-382; 404-415; 550-559; 572-583; 620-632; 644-648; 650-662 AND 739-748</scope>
    <source>
        <tissue>Placenta</tissue>
    </source>
</reference>
<reference key="9">
    <citation type="journal article" date="1991" name="Neurosci. Lett.">
        <title>Isolation and sub-chromosomal localization of a DNA fragment of the human choline acetyltransferase gene.</title>
        <authorList>
            <person name="Cervini R."/>
            <person name="Rocchi M."/>
            <person name="DiDonato S."/>
            <person name="Finocchiaro G."/>
        </authorList>
    </citation>
    <scope>NUCLEOTIDE SEQUENCE [GENOMIC DNA] OF 688-738</scope>
    <source>
        <tissue>Lymphocyte</tissue>
    </source>
</reference>
<reference key="10">
    <citation type="journal article" date="2006" name="Biochemistry">
        <title>Substrate binding and catalytic mechanism of human choline acetyltransferase.</title>
        <authorList>
            <person name="Kim A.-R."/>
            <person name="Rylett R.J."/>
            <person name="Shilton B.H."/>
        </authorList>
    </citation>
    <scope>X-RAY CRYSTALLOGRAPHY (2.3 ANGSTROMS) OF 120-733 IN COMPLEXES WITH CHOLINE AND ACETYL COENZYME A</scope>
    <scope>FUNCTION</scope>
    <scope>CATALYTIC ACTIVITY</scope>
</reference>
<reference key="11">
    <citation type="journal article" date="2003" name="Arch. Neurol.">
        <title>Congenital myasthenic syndrome with episodic apnea in patients homozygous for a CHAT missense mutation.</title>
        <authorList>
            <person name="Kraner S."/>
            <person name="Laufenberg I."/>
            <person name="Strassburg H.M."/>
            <person name="Sieb J.P."/>
            <person name="Steinlein O.K."/>
        </authorList>
    </citation>
    <scope>VARIANT CMS6 THR-336</scope>
</reference>
<comment type="function">
    <text evidence="8">Catalyzes the reversible synthesis of acetylcholine (ACh) from acetyl CoA and choline at cholinergic synapses.</text>
</comment>
<comment type="catalytic activity">
    <reaction evidence="8">
        <text>choline + acetyl-CoA = acetylcholine + CoA</text>
        <dbReference type="Rhea" id="RHEA:18821"/>
        <dbReference type="ChEBI" id="CHEBI:15354"/>
        <dbReference type="ChEBI" id="CHEBI:15355"/>
        <dbReference type="ChEBI" id="CHEBI:57287"/>
        <dbReference type="ChEBI" id="CHEBI:57288"/>
        <dbReference type="EC" id="2.3.1.6"/>
    </reaction>
</comment>
<comment type="interaction">
    <interactant intactId="EBI-25837549">
        <id>P28329-3</id>
    </interactant>
    <interactant intactId="EBI-16436655">
        <id>Q6H8Q1-8</id>
        <label>ABLIM2</label>
    </interactant>
    <organismsDiffer>false</organismsDiffer>
    <experiments>3</experiments>
</comment>
<comment type="interaction">
    <interactant intactId="EBI-25837549">
        <id>P28329-3</id>
    </interactant>
    <interactant intactId="EBI-25838028">
        <id>Q8N302-2</id>
        <label>AGGF1</label>
    </interactant>
    <organismsDiffer>false</organismsDiffer>
    <experiments>3</experiments>
</comment>
<comment type="interaction">
    <interactant intactId="EBI-25837549">
        <id>P28329-3</id>
    </interactant>
    <interactant intactId="EBI-18172597">
        <id>Q9NXL2-1</id>
        <label>ARHGEF38</label>
    </interactant>
    <organismsDiffer>false</organismsDiffer>
    <experiments>3</experiments>
</comment>
<comment type="interaction">
    <interactant intactId="EBI-25837549">
        <id>P28329-3</id>
    </interactant>
    <interactant intactId="EBI-10254793">
        <id>Q6XD76</id>
        <label>ASCL4</label>
    </interactant>
    <organismsDiffer>false</organismsDiffer>
    <experiments>3</experiments>
</comment>
<comment type="interaction">
    <interactant intactId="EBI-25837549">
        <id>P28329-3</id>
    </interactant>
    <interactant intactId="EBI-718459">
        <id>Q9UII2</id>
        <label>ATP5IF1</label>
    </interactant>
    <organismsDiffer>false</organismsDiffer>
    <experiments>3</experiments>
</comment>
<comment type="interaction">
    <interactant intactId="EBI-25837549">
        <id>P28329-3</id>
    </interactant>
    <interactant intactId="EBI-742750">
        <id>Q8TBE0</id>
        <label>BAHD1</label>
    </interactant>
    <organismsDiffer>false</organismsDiffer>
    <experiments>3</experiments>
</comment>
<comment type="interaction">
    <interactant intactId="EBI-25837549">
        <id>P28329-3</id>
    </interactant>
    <interactant intactId="EBI-9092016">
        <id>Q9UQB8-6</id>
        <label>BAIAP2</label>
    </interactant>
    <organismsDiffer>false</organismsDiffer>
    <experiments>3</experiments>
</comment>
<comment type="interaction">
    <interactant intactId="EBI-25837549">
        <id>P28329-3</id>
    </interactant>
    <interactant intactId="EBI-23662416">
        <id>Q9ULD4-2</id>
        <label>BRPF3</label>
    </interactant>
    <organismsDiffer>false</organismsDiffer>
    <experiments>3</experiments>
</comment>
<comment type="interaction">
    <interactant intactId="EBI-25837549">
        <id>P28329-3</id>
    </interactant>
    <interactant intactId="EBI-10693038">
        <id>Q9NSI6-4</id>
        <label>BRWD1</label>
    </interactant>
    <organismsDiffer>false</organismsDiffer>
    <experiments>3</experiments>
</comment>
<comment type="interaction">
    <interactant intactId="EBI-25837549">
        <id>P28329-3</id>
    </interactant>
    <interactant intactId="EBI-7317823">
        <id>Q6P5X5</id>
        <label>C22orf39</label>
    </interactant>
    <organismsDiffer>false</organismsDiffer>
    <experiments>3</experiments>
</comment>
<comment type="interaction">
    <interactant intactId="EBI-25837549">
        <id>P28329-3</id>
    </interactant>
    <interactant intactId="EBI-751596">
        <id>Q96LL4</id>
        <label>C8orf48</label>
    </interactant>
    <organismsDiffer>false</organismsDiffer>
    <experiments>3</experiments>
</comment>
<comment type="interaction">
    <interactant intactId="EBI-25837549">
        <id>P28329-3</id>
    </interactant>
    <interactant intactId="EBI-11532021">
        <id>P20807-4</id>
        <label>CAPN3</label>
    </interactant>
    <organismsDiffer>false</organismsDiffer>
    <experiments>3</experiments>
</comment>
<comment type="interaction">
    <interactant intactId="EBI-25837549">
        <id>P28329-3</id>
    </interactant>
    <interactant intactId="EBI-4392727">
        <id>O00257-3</id>
        <label>CBX4</label>
    </interactant>
    <organismsDiffer>false</organismsDiffer>
    <experiments>3</experiments>
</comment>
<comment type="interaction">
    <interactant intactId="EBI-25837549">
        <id>P28329-3</id>
    </interactant>
    <interactant intactId="EBI-49119542">
        <id>Q6ZP82-1</id>
        <label>CCDC141</label>
    </interactant>
    <organismsDiffer>false</organismsDiffer>
    <experiments>3</experiments>
</comment>
<comment type="interaction">
    <interactant intactId="EBI-25837549">
        <id>P28329-3</id>
    </interactant>
    <interactant intactId="EBI-3913685">
        <id>O95674</id>
        <label>CDS2</label>
    </interactant>
    <organismsDiffer>false</organismsDiffer>
    <experiments>3</experiments>
</comment>
<comment type="interaction">
    <interactant intactId="EBI-25837549">
        <id>P28329-3</id>
    </interactant>
    <interactant intactId="EBI-1003700">
        <id>Q9H3R5</id>
        <label>CENPH</label>
    </interactant>
    <organismsDiffer>false</organismsDiffer>
    <experiments>3</experiments>
</comment>
<comment type="interaction">
    <interactant intactId="EBI-25837549">
        <id>P28329-3</id>
    </interactant>
    <interactant intactId="EBI-749253">
        <id>Q8WUX9</id>
        <label>CHMP7</label>
    </interactant>
    <organismsDiffer>false</organismsDiffer>
    <experiments>3</experiments>
</comment>
<comment type="interaction">
    <interactant intactId="EBI-25837549">
        <id>P28329-3</id>
    </interactant>
    <interactant intactId="EBI-21642354">
        <id>Q9H2A9</id>
        <label>CHST8</label>
    </interactant>
    <organismsDiffer>false</organismsDiffer>
    <experiments>3</experiments>
</comment>
<comment type="interaction">
    <interactant intactId="EBI-25837549">
        <id>P28329-3</id>
    </interactant>
    <interactant intactId="EBI-6660184">
        <id>Q3SX64</id>
        <label>CIMAP1D</label>
    </interactant>
    <organismsDiffer>false</organismsDiffer>
    <experiments>3</experiments>
</comment>
<comment type="interaction">
    <interactant intactId="EBI-25837549">
        <id>P28329-3</id>
    </interactant>
    <interactant intactId="EBI-23669343">
        <id>Q92782-2</id>
        <label>DPF1</label>
    </interactant>
    <organismsDiffer>false</organismsDiffer>
    <experiments>3</experiments>
</comment>
<comment type="interaction">
    <interactant intactId="EBI-25837549">
        <id>P28329-3</id>
    </interactant>
    <interactant intactId="EBI-12275416">
        <id>Q14117</id>
        <label>DPYS</label>
    </interactant>
    <organismsDiffer>false</organismsDiffer>
    <experiments>3</experiments>
</comment>
<comment type="interaction">
    <interactant intactId="EBI-25837549">
        <id>P28329-3</id>
    </interactant>
    <interactant intactId="EBI-740850">
        <id>O14641</id>
        <label>DVL2</label>
    </interactant>
    <organismsDiffer>false</organismsDiffer>
    <experiments>3</experiments>
</comment>
<comment type="interaction">
    <interactant intactId="EBI-25837549">
        <id>P28329-3</id>
    </interactant>
    <interactant intactId="EBI-10248874">
        <id>Q658K8</id>
        <label>EEF1DP3</label>
    </interactant>
    <organismsDiffer>false</organismsDiffer>
    <experiments>3</experiments>
</comment>
<comment type="interaction">
    <interactant intactId="EBI-25837549">
        <id>P28329-3</id>
    </interactant>
    <interactant intactId="EBI-12920100">
        <id>Q6UXG2-3</id>
        <label>ELAPOR1</label>
    </interactant>
    <organismsDiffer>false</organismsDiffer>
    <experiments>3</experiments>
</comment>
<comment type="interaction">
    <interactant intactId="EBI-25837549">
        <id>P28329-3</id>
    </interactant>
    <interactant intactId="EBI-395274">
        <id>O00472</id>
        <label>ELL2</label>
    </interactant>
    <organismsDiffer>false</organismsDiffer>
    <experiments>3</experiments>
</comment>
<comment type="interaction">
    <interactant intactId="EBI-25837549">
        <id>P28329-3</id>
    </interactant>
    <interactant intactId="EBI-10213520">
        <id>Q6NXG1</id>
        <label>ESRP1</label>
    </interactant>
    <organismsDiffer>false</organismsDiffer>
    <experiments>3</experiments>
</comment>
<comment type="interaction">
    <interactant intactId="EBI-25837549">
        <id>P28329-3</id>
    </interactant>
    <interactant intactId="EBI-10699473">
        <id>Q15910-2</id>
        <label>EZH2</label>
    </interactant>
    <organismsDiffer>false</organismsDiffer>
    <experiments>3</experiments>
</comment>
<comment type="interaction">
    <interactant intactId="EBI-25837549">
        <id>P28329-3</id>
    </interactant>
    <interactant intactId="EBI-8468186">
        <id>Q8IZU1</id>
        <label>FAM9A</label>
    </interactant>
    <organismsDiffer>false</organismsDiffer>
    <experiments>3</experiments>
</comment>
<comment type="interaction">
    <interactant intactId="EBI-25837549">
        <id>P28329-3</id>
    </interactant>
    <interactant intactId="EBI-744510">
        <id>P15407</id>
        <label>FOSL1</label>
    </interactant>
    <organismsDiffer>false</organismsDiffer>
    <experiments>3</experiments>
</comment>
<comment type="interaction">
    <interactant intactId="EBI-25837549">
        <id>P28329-3</id>
    </interactant>
    <interactant intactId="EBI-3910364">
        <id>P55318</id>
        <label>FOXA3</label>
    </interactant>
    <organismsDiffer>false</organismsDiffer>
    <experiments>3</experiments>
</comment>
<comment type="interaction">
    <interactant intactId="EBI-25837549">
        <id>P28329-3</id>
    </interactant>
    <interactant intactId="EBI-9088619">
        <id>Q06547-3</id>
        <label>GABPB1</label>
    </interactant>
    <organismsDiffer>false</organismsDiffer>
    <experiments>3</experiments>
</comment>
<comment type="interaction">
    <interactant intactId="EBI-25837549">
        <id>P28329-3</id>
    </interactant>
    <interactant intactId="EBI-21856389">
        <id>P23769-2</id>
        <label>GATA2</label>
    </interactant>
    <organismsDiffer>false</organismsDiffer>
    <experiments>3</experiments>
</comment>
<comment type="interaction">
    <interactant intactId="EBI-25837549">
        <id>P28329-3</id>
    </interactant>
    <interactant intactId="EBI-6664760">
        <id>P23771</id>
        <label>GATA3</label>
    </interactant>
    <organismsDiffer>false</organismsDiffer>
    <experiments>3</experiments>
</comment>
<comment type="interaction">
    <interactant intactId="EBI-25837549">
        <id>P28329-3</id>
    </interactant>
    <interactant intactId="EBI-712457">
        <id>Q15486</id>
        <label>GUSBP1</label>
    </interactant>
    <organismsDiffer>false</organismsDiffer>
    <experiments>3</experiments>
</comment>
<comment type="interaction">
    <interactant intactId="EBI-25837549">
        <id>P28329-3</id>
    </interactant>
    <interactant intactId="EBI-743438">
        <id>Q8IV36</id>
        <label>HID1</label>
    </interactant>
    <organismsDiffer>false</organismsDiffer>
    <experiments>3</experiments>
</comment>
<comment type="interaction">
    <interactant intactId="EBI-25837549">
        <id>P28329-3</id>
    </interactant>
    <interactant intactId="EBI-17494170">
        <id>Q4VB01</id>
        <label>HOXB1</label>
    </interactant>
    <organismsDiffer>false</organismsDiffer>
    <experiments>3</experiments>
</comment>
<comment type="interaction">
    <interactant intactId="EBI-25837549">
        <id>P28329-3</id>
    </interactant>
    <interactant intactId="EBI-2963255">
        <id>Q53GQ0</id>
        <label>HSD17B12</label>
    </interactant>
    <organismsDiffer>false</organismsDiffer>
    <experiments>3</experiments>
</comment>
<comment type="interaction">
    <interactant intactId="EBI-25837549">
        <id>P28329-3</id>
    </interactant>
    <interactant intactId="EBI-352528">
        <id>P10809</id>
        <label>HSPD1</label>
    </interactant>
    <organismsDiffer>false</organismsDiffer>
    <experiments>3</experiments>
</comment>
<comment type="interaction">
    <interactant intactId="EBI-25837549">
        <id>P28329-3</id>
    </interactant>
    <interactant intactId="EBI-1215527">
        <id>P41134</id>
        <label>ID1</label>
    </interactant>
    <organismsDiffer>false</organismsDiffer>
    <experiments>3</experiments>
</comment>
<comment type="interaction">
    <interactant intactId="EBI-25837549">
        <id>P28329-3</id>
    </interactant>
    <interactant intactId="EBI-3862125">
        <id>Q9NZH6</id>
        <label>IL37</label>
    </interactant>
    <organismsDiffer>false</organismsDiffer>
    <experiments>3</experiments>
</comment>
<comment type="interaction">
    <interactant intactId="EBI-25837549">
        <id>P28329-3</id>
    </interactant>
    <interactant intactId="EBI-10220600">
        <id>Q8NA54</id>
        <label>IQUB</label>
    </interactant>
    <organismsDiffer>false</organismsDiffer>
    <experiments>3</experiments>
</comment>
<comment type="interaction">
    <interactant intactId="EBI-25837549">
        <id>P28329-3</id>
    </interactant>
    <interactant intactId="EBI-10258659">
        <id>Q86U28</id>
        <label>ISCA2</label>
    </interactant>
    <organismsDiffer>false</organismsDiffer>
    <experiments>3</experiments>
</comment>
<comment type="interaction">
    <interactant intactId="EBI-25837549">
        <id>P28329-3</id>
    </interactant>
    <interactant intactId="EBI-748062">
        <id>P17275</id>
        <label>JUNB</label>
    </interactant>
    <organismsDiffer>false</organismsDiffer>
    <experiments>3</experiments>
</comment>
<comment type="interaction">
    <interactant intactId="EBI-25837549">
        <id>P28329-3</id>
    </interactant>
    <interactant intactId="EBI-743960">
        <id>Q8N5Z5</id>
        <label>KCTD17</label>
    </interactant>
    <organismsDiffer>false</organismsDiffer>
    <experiments>3</experiments>
</comment>
<comment type="interaction">
    <interactant intactId="EBI-25837549">
        <id>P28329-3</id>
    </interactant>
    <interactant intactId="EBI-1643885">
        <id>Q6P597</id>
        <label>KLC3</label>
    </interactant>
    <organismsDiffer>false</organismsDiffer>
    <experiments>3</experiments>
</comment>
<comment type="interaction">
    <interactant intactId="EBI-25837549">
        <id>P28329-3</id>
    </interactant>
    <interactant intactId="EBI-742756">
        <id>P08727</id>
        <label>KRT19</label>
    </interactant>
    <organismsDiffer>false</organismsDiffer>
    <experiments>3</experiments>
</comment>
<comment type="interaction">
    <interactant intactId="EBI-25837549">
        <id>P28329-3</id>
    </interactant>
    <interactant intactId="EBI-1049638">
        <id>Q14525</id>
        <label>KRT33B</label>
    </interactant>
    <organismsDiffer>false</organismsDiffer>
    <experiments>3</experiments>
</comment>
<comment type="interaction">
    <interactant intactId="EBI-25837549">
        <id>P28329-3</id>
    </interactant>
    <interactant intactId="EBI-10261141">
        <id>Q8IUC2</id>
        <label>KRTAP8-1</label>
    </interactant>
    <organismsDiffer>false</organismsDiffer>
    <experiments>3</experiments>
</comment>
<comment type="interaction">
    <interactant intactId="EBI-25837549">
        <id>P28329-3</id>
    </interactant>
    <interactant intactId="EBI-715385">
        <id>Q6IAA8</id>
        <label>LAMTOR1</label>
    </interactant>
    <organismsDiffer>false</organismsDiffer>
    <experiments>3</experiments>
</comment>
<comment type="interaction">
    <interactant intactId="EBI-25837549">
        <id>P28329-3</id>
    </interactant>
    <interactant intactId="EBI-9088686">
        <id>Q14847-2</id>
        <label>LASP1</label>
    </interactant>
    <organismsDiffer>false</organismsDiffer>
    <experiments>3</experiments>
</comment>
<comment type="interaction">
    <interactant intactId="EBI-25837549">
        <id>P28329-3</id>
    </interactant>
    <interactant intactId="EBI-3911344">
        <id>P27338</id>
        <label>MAOB</label>
    </interactant>
    <organismsDiffer>false</organismsDiffer>
    <experiments>3</experiments>
</comment>
<comment type="interaction">
    <interactant intactId="EBI-25837549">
        <id>P28329-3</id>
    </interactant>
    <interactant intactId="EBI-373144">
        <id>Q9GZQ8</id>
        <label>MAP1LC3B</label>
    </interactant>
    <organismsDiffer>false</organismsDiffer>
    <experiments>3</experiments>
</comment>
<comment type="interaction">
    <interactant intactId="EBI-25837549">
        <id>P28329-3</id>
    </interactant>
    <interactant intactId="EBI-10242717">
        <id>Q53S70</id>
        <label>MGC4677</label>
    </interactant>
    <organismsDiffer>false</organismsDiffer>
    <experiments>3</experiments>
</comment>
<comment type="interaction">
    <interactant intactId="EBI-25837549">
        <id>P28329-3</id>
    </interactant>
    <interactant intactId="EBI-2801965">
        <id>Q5JXC2</id>
        <label>MIIP</label>
    </interactant>
    <organismsDiffer>false</organismsDiffer>
    <experiments>3</experiments>
</comment>
<comment type="interaction">
    <interactant intactId="EBI-25837549">
        <id>P28329-3</id>
    </interactant>
    <interactant intactId="EBI-25835557">
        <id>A0A0A0MR05</id>
        <label>MLST8</label>
    </interactant>
    <organismsDiffer>false</organismsDiffer>
    <experiments>3</experiments>
</comment>
<comment type="interaction">
    <interactant intactId="EBI-25837549">
        <id>P28329-3</id>
    </interactant>
    <interactant intactId="EBI-743811">
        <id>Q8NEH6</id>
        <label>MNS1</label>
    </interactant>
    <organismsDiffer>false</organismsDiffer>
    <experiments>3</experiments>
</comment>
<comment type="interaction">
    <interactant intactId="EBI-25837549">
        <id>P28329-3</id>
    </interactant>
    <interactant intactId="EBI-9538727">
        <id>Q8TCY5</id>
        <label>MRAP</label>
    </interactant>
    <organismsDiffer>false</organismsDiffer>
    <experiments>3</experiments>
</comment>
<comment type="interaction">
    <interactant intactId="EBI-25837549">
        <id>P28329-3</id>
    </interactant>
    <interactant intactId="EBI-25835707">
        <id>Q6IN84-2</id>
        <label>MRM1</label>
    </interactant>
    <organismsDiffer>false</organismsDiffer>
    <experiments>3</experiments>
</comment>
<comment type="interaction">
    <interactant intactId="EBI-25837549">
        <id>P28329-3</id>
    </interactant>
    <interactant intactId="EBI-8466227">
        <id>Q96H12</id>
        <label>MSANTD3</label>
    </interactant>
    <organismsDiffer>false</organismsDiffer>
    <experiments>3</experiments>
</comment>
<comment type="interaction">
    <interactant intactId="EBI-25837549">
        <id>P28329-3</id>
    </interactant>
    <interactant intactId="EBI-447544">
        <id>P01106</id>
        <label>MYC</label>
    </interactant>
    <organismsDiffer>false</organismsDiffer>
    <experiments>3</experiments>
</comment>
<comment type="interaction">
    <interactant intactId="EBI-25837549">
        <id>P28329-3</id>
    </interactant>
    <interactant intactId="EBI-12135485">
        <id>P41271-2</id>
        <label>NBL1</label>
    </interactant>
    <organismsDiffer>false</organismsDiffer>
    <experiments>3</experiments>
</comment>
<comment type="interaction">
    <interactant intactId="EBI-25837549">
        <id>P28329-3</id>
    </interactant>
    <interactant intactId="EBI-395044">
        <id>P14598</id>
        <label>NCF1</label>
    </interactant>
    <organismsDiffer>false</organismsDiffer>
    <experiments>3</experiments>
</comment>
<comment type="interaction">
    <interactant intactId="EBI-25837549">
        <id>P28329-3</id>
    </interactant>
    <interactant intactId="EBI-928842">
        <id>Q9GZM8</id>
        <label>NDEL1</label>
    </interactant>
    <organismsDiffer>false</organismsDiffer>
    <experiments>3</experiments>
</comment>
<comment type="interaction">
    <interactant intactId="EBI-25837549">
        <id>P28329-3</id>
    </interactant>
    <interactant intactId="EBI-9090919">
        <id>Q5BJF6-2</id>
        <label>ODF2</label>
    </interactant>
    <organismsDiffer>false</organismsDiffer>
    <experiments>3</experiments>
</comment>
<comment type="interaction">
    <interactant intactId="EBI-25837549">
        <id>P28329-3</id>
    </interactant>
    <interactant intactId="EBI-714785">
        <id>Q9H8K7</id>
        <label>PAAT</label>
    </interactant>
    <organismsDiffer>false</organismsDiffer>
    <experiments>3</experiments>
</comment>
<comment type="interaction">
    <interactant intactId="EBI-25837549">
        <id>P28329-3</id>
    </interactant>
    <interactant intactId="EBI-17159452">
        <id>Q9NR21-5</id>
        <label>PARP11</label>
    </interactant>
    <organismsDiffer>false</organismsDiffer>
    <experiments>3</experiments>
</comment>
<comment type="interaction">
    <interactant intactId="EBI-25837549">
        <id>P28329-3</id>
    </interactant>
    <interactant intactId="EBI-25837868">
        <id>Q5VU43-8</id>
        <label>PDE4DIP</label>
    </interactant>
    <organismsDiffer>false</organismsDiffer>
    <experiments>3</experiments>
</comment>
<comment type="interaction">
    <interactant intactId="EBI-25837549">
        <id>P28329-3</id>
    </interactant>
    <interactant intactId="EBI-10231995">
        <id>Q13956</id>
        <label>PDE6H</label>
    </interactant>
    <organismsDiffer>false</organismsDiffer>
    <experiments>3</experiments>
</comment>
<comment type="interaction">
    <interactant intactId="EBI-25837549">
        <id>P28329-3</id>
    </interactant>
    <interactant intactId="EBI-26412802">
        <id>Q5SXH7-1</id>
        <label>PLEKHS1</label>
    </interactant>
    <organismsDiffer>false</organismsDiffer>
    <experiments>3</experiments>
</comment>
<comment type="interaction">
    <interactant intactId="EBI-25837549">
        <id>P28329-3</id>
    </interactant>
    <interactant intactId="EBI-1045072">
        <id>Q96T60</id>
        <label>PNKP</label>
    </interactant>
    <organismsDiffer>false</organismsDiffer>
    <experiments>3</experiments>
</comment>
<comment type="interaction">
    <interactant intactId="EBI-25837549">
        <id>P28329-3</id>
    </interactant>
    <interactant intactId="EBI-710402">
        <id>Q96I34</id>
        <label>PPP1R16A</label>
    </interactant>
    <organismsDiffer>false</organismsDiffer>
    <experiments>3</experiments>
</comment>
<comment type="interaction">
    <interactant intactId="EBI-25837549">
        <id>P28329-3</id>
    </interactant>
    <interactant intactId="EBI-2803203">
        <id>Q86UA1</id>
        <label>PRPF39</label>
    </interactant>
    <organismsDiffer>false</organismsDiffer>
    <experiments>3</experiments>
</comment>
<comment type="interaction">
    <interactant intactId="EBI-25837549">
        <id>P28329-3</id>
    </interactant>
    <interactant intactId="EBI-749285">
        <id>Q15311</id>
        <label>RALBP1</label>
    </interactant>
    <organismsDiffer>false</organismsDiffer>
    <experiments>3</experiments>
</comment>
<comment type="interaction">
    <interactant intactId="EBI-25837549">
        <id>P28329-3</id>
    </interactant>
    <interactant intactId="EBI-12068216">
        <id>Q8TBY0</id>
        <label>RBM46</label>
    </interactant>
    <organismsDiffer>false</organismsDiffer>
    <experiments>3</experiments>
</comment>
<comment type="interaction">
    <interactant intactId="EBI-25837549">
        <id>P28329-3</id>
    </interactant>
    <interactant intactId="EBI-73886">
        <id>Q04206</id>
        <label>RELA</label>
    </interactant>
    <organismsDiffer>false</organismsDiffer>
    <experiments>3</experiments>
</comment>
<comment type="interaction">
    <interactant intactId="EBI-25837549">
        <id>P28329-3</id>
    </interactant>
    <interactant intactId="EBI-25834767">
        <id>P47804-3</id>
        <label>RGR</label>
    </interactant>
    <organismsDiffer>false</organismsDiffer>
    <experiments>3</experiments>
</comment>
<comment type="interaction">
    <interactant intactId="EBI-25837549">
        <id>P28329-3</id>
    </interactant>
    <interactant intactId="EBI-751555">
        <id>Q9H0X6</id>
        <label>RNF208</label>
    </interactant>
    <organismsDiffer>false</organismsDiffer>
    <experiments>3</experiments>
</comment>
<comment type="interaction">
    <interactant intactId="EBI-25837549">
        <id>P28329-3</id>
    </interactant>
    <interactant intactId="EBI-1053664">
        <id>P62899</id>
        <label>RPL31</label>
    </interactant>
    <organismsDiffer>false</organismsDiffer>
    <experiments>3</experiments>
</comment>
<comment type="interaction">
    <interactant intactId="EBI-25837549">
        <id>P28329-3</id>
    </interactant>
    <interactant intactId="EBI-10248967">
        <id>Q66K80</id>
        <label>RUSC1-AS1</label>
    </interactant>
    <organismsDiffer>false</organismsDiffer>
    <experiments>3</experiments>
</comment>
<comment type="interaction">
    <interactant intactId="EBI-25837549">
        <id>P28329-3</id>
    </interactant>
    <interactant intactId="EBI-25837959">
        <id>Q9BY12-3</id>
        <label>SCAPER</label>
    </interactant>
    <organismsDiffer>false</organismsDiffer>
    <experiments>3</experiments>
</comment>
<comment type="interaction">
    <interactant intactId="EBI-25837549">
        <id>P28329-3</id>
    </interactant>
    <interactant intactId="EBI-10696955">
        <id>Q86SQ7-2</id>
        <label>SDCCAG8</label>
    </interactant>
    <organismsDiffer>false</organismsDiffer>
    <experiments>3</experiments>
</comment>
<comment type="interaction">
    <interactant intactId="EBI-25837549">
        <id>P28329-3</id>
    </interactant>
    <interactant intactId="EBI-10696971">
        <id>Q7Z6I5</id>
        <label>SPATA12</label>
    </interactant>
    <organismsDiffer>false</organismsDiffer>
    <experiments>3</experiments>
</comment>
<comment type="interaction">
    <interactant intactId="EBI-25837549">
        <id>P28329-3</id>
    </interactant>
    <interactant intactId="EBI-3923692">
        <id>Q496A3</id>
        <label>SPATS1</label>
    </interactant>
    <organismsDiffer>false</organismsDiffer>
    <experiments>3</experiments>
</comment>
<comment type="interaction">
    <interactant intactId="EBI-25837549">
        <id>P28329-3</id>
    </interactant>
    <interactant intactId="EBI-7082156">
        <id>Q7Z698</id>
        <label>SPRED2</label>
    </interactant>
    <organismsDiffer>false</organismsDiffer>
    <experiments>3</experiments>
</comment>
<comment type="interaction">
    <interactant intactId="EBI-25837549">
        <id>P28329-3</id>
    </interactant>
    <interactant intactId="EBI-354861">
        <id>Q9C004</id>
        <label>SPRY4</label>
    </interactant>
    <organismsDiffer>false</organismsDiffer>
    <experiments>3</experiments>
</comment>
<comment type="interaction">
    <interactant intactId="EBI-25837549">
        <id>P28329-3</id>
    </interactant>
    <interactant intactId="EBI-12025738">
        <id>Q92783-2</id>
        <label>STAM</label>
    </interactant>
    <organismsDiffer>false</organismsDiffer>
    <experiments>3</experiments>
</comment>
<comment type="interaction">
    <interactant intactId="EBI-25837549">
        <id>P28329-3</id>
    </interactant>
    <interactant intactId="EBI-8484990">
        <id>Q8N4C7</id>
        <label>STX19</label>
    </interactant>
    <organismsDiffer>false</organismsDiffer>
    <experiments>3</experiments>
</comment>
<comment type="interaction">
    <interactant intactId="EBI-25837549">
        <id>P28329-3</id>
    </interactant>
    <interactant intactId="EBI-473249">
        <id>O75528</id>
        <label>TADA3</label>
    </interactant>
    <organismsDiffer>false</organismsDiffer>
    <experiments>3</experiments>
</comment>
<comment type="interaction">
    <interactant intactId="EBI-25837549">
        <id>P28329-3</id>
    </interactant>
    <interactant intactId="EBI-15695297">
        <id>Q15814</id>
        <label>TBCC</label>
    </interactant>
    <organismsDiffer>false</organismsDiffer>
    <experiments>3</experiments>
</comment>
<comment type="interaction">
    <interactant intactId="EBI-25837549">
        <id>P28329-3</id>
    </interactant>
    <interactant intactId="EBI-954089">
        <id>O15273</id>
        <label>TCAP</label>
    </interactant>
    <organismsDiffer>false</organismsDiffer>
    <experiments>3</experiments>
</comment>
<comment type="interaction">
    <interactant intactId="EBI-25837549">
        <id>P28329-3</id>
    </interactant>
    <interactant intactId="EBI-752030">
        <id>Q96A09</id>
        <label>TENT5B</label>
    </interactant>
    <organismsDiffer>false</organismsDiffer>
    <experiments>3</experiments>
</comment>
<comment type="interaction">
    <interactant intactId="EBI-25837549">
        <id>P28329-3</id>
    </interactant>
    <interactant intactId="EBI-17438286">
        <id>Q8WTV1</id>
        <label>THAP3</label>
    </interactant>
    <organismsDiffer>false</organismsDiffer>
    <experiments>3</experiments>
</comment>
<comment type="interaction">
    <interactant intactId="EBI-25837549">
        <id>P28329-3</id>
    </interactant>
    <interactant intactId="EBI-10242677">
        <id>Q53NU3</id>
        <label>tmp_locus_54</label>
    </interactant>
    <organismsDiffer>false</organismsDiffer>
    <experiments>3</experiments>
</comment>
<comment type="interaction">
    <interactant intactId="EBI-25837549">
        <id>P28329-3</id>
    </interactant>
    <interactant intactId="EBI-25831574">
        <id>Q71RG4-4</id>
        <label>TMUB2</label>
    </interactant>
    <organismsDiffer>false</organismsDiffer>
    <experiments>3</experiments>
</comment>
<comment type="interaction">
    <interactant intactId="EBI-25837549">
        <id>P28329-3</id>
    </interactant>
    <interactant intactId="EBI-11525489">
        <id>Q86WT6-2</id>
        <label>TRIM69</label>
    </interactant>
    <organismsDiffer>false</organismsDiffer>
    <experiments>3</experiments>
</comment>
<comment type="interaction">
    <interactant intactId="EBI-25837549">
        <id>P28329-3</id>
    </interactant>
    <interactant intactId="EBI-739485">
        <id>Q9Y3Q8</id>
        <label>TSC22D4</label>
    </interactant>
    <organismsDiffer>false</organismsDiffer>
    <experiments>3</experiments>
</comment>
<comment type="interaction">
    <interactant intactId="EBI-25837549">
        <id>P28329-3</id>
    </interactant>
    <interactant intactId="EBI-21353855">
        <id>Q99598</id>
        <label>TSNAX</label>
    </interactant>
    <organismsDiffer>false</organismsDiffer>
    <experiments>3</experiments>
</comment>
<comment type="interaction">
    <interactant intactId="EBI-25837549">
        <id>P28329-3</id>
    </interactant>
    <interactant intactId="EBI-2339348">
        <id>P49459</id>
        <label>UBE2A</label>
    </interactant>
    <organismsDiffer>false</organismsDiffer>
    <experiments>3</experiments>
</comment>
<comment type="interaction">
    <interactant intactId="EBI-25837549">
        <id>P28329-3</id>
    </interactant>
    <interactant intactId="EBI-356983">
        <id>P11441</id>
        <label>UBL4A</label>
    </interactant>
    <organismsDiffer>false</organismsDiffer>
    <experiments>3</experiments>
</comment>
<comment type="interaction">
    <interactant intactId="EBI-25837549">
        <id>P28329-3</id>
    </interactant>
    <interactant intactId="EBI-373380">
        <id>Q9H270</id>
        <label>VPS11</label>
    </interactant>
    <organismsDiffer>false</organismsDiffer>
    <experiments>3</experiments>
</comment>
<comment type="interaction">
    <interactant intactId="EBI-25837549">
        <id>P28329-3</id>
    </interactant>
    <interactant intactId="EBI-11745701">
        <id>P19544-6</id>
        <label>WT1</label>
    </interactant>
    <organismsDiffer>false</organismsDiffer>
    <experiments>3</experiments>
</comment>
<comment type="interaction">
    <interactant intactId="EBI-25837549">
        <id>P28329-3</id>
    </interactant>
    <interactant intactId="EBI-14104088">
        <id>Q53FD0-2</id>
        <label>ZC2HC1C</label>
    </interactant>
    <organismsDiffer>false</organismsDiffer>
    <experiments>3</experiments>
</comment>
<comment type="interaction">
    <interactant intactId="EBI-25837549">
        <id>P28329-3</id>
    </interactant>
    <interactant intactId="EBI-18036029">
        <id>Q3KNS6-3</id>
        <label>ZNF829</label>
    </interactant>
    <organismsDiffer>false</organismsDiffer>
    <experiments>3</experiments>
</comment>
<comment type="alternative products">
    <event type="alternative splicing"/>
    <isoform>
        <id>P28329-1</id>
        <name>M</name>
        <name>83 kDa</name>
        <sequence type="displayed"/>
    </isoform>
    <isoform>
        <id>P28329-2</id>
        <name>S</name>
        <name>74 kDa</name>
        <sequence type="described" ref="VSP_000790"/>
    </isoform>
    <isoform>
        <id>P28329-3</id>
        <name>R</name>
        <name>70 kDa</name>
        <sequence type="described" ref="VSP_000791"/>
    </isoform>
</comment>
<comment type="disease" evidence="3 4">
    <disease id="DI-00370">
        <name>Myasthenic syndrome, congenital, 6, presynaptic</name>
        <acronym>CMS6</acronym>
        <description>A form of congenital myasthenic syndrome, a group of disorders characterized by failure of neuromuscular transmission, including pre-synaptic, synaptic, and post-synaptic disorders that are not of autoimmune origin. Clinical features are easy fatigability and muscle weakness affecting the axial and limb muscles (with hypotonia in early-onset forms), the ocular muscles (leading to ptosis and ophthalmoplegia), and the facial and bulbar musculature (affecting sucking and swallowing, and leading to dysphonia). The symptoms fluctuate and worsen with physical effort. CMS6 affected individuals have myasthenic symptoms since birth or early infancy, negative tests for anti-AChR antibodies, and abrupt episodic crises with increased weakness, bulbar paralysis, and apnea precipitated by undue exertion, fever, or excitement. CMS6 inheritance is autosomal recessive.</description>
        <dbReference type="MIM" id="254210"/>
    </disease>
    <text>The disease is caused by variants affecting the gene represented in this entry.</text>
</comment>
<comment type="similarity">
    <text evidence="11">Belongs to the carnitine/choline acetyltransferase family.</text>
</comment>
<comment type="online information" name="Wikipedia">
    <link uri="https://en.wikipedia.org/wiki/Choline_acetyltransferase"/>
    <text>Choline acetyltransferase entry</text>
</comment>
<feature type="chain" id="PRO_0000210154" description="Choline O-acetyltransferase">
    <location>
        <begin position="1"/>
        <end position="748"/>
    </location>
</feature>
<feature type="region of interest" description="Disordered" evidence="2">
    <location>
        <begin position="1"/>
        <end position="89"/>
    </location>
</feature>
<feature type="region of interest" description="Disordered" evidence="2">
    <location>
        <begin position="727"/>
        <end position="748"/>
    </location>
</feature>
<feature type="compositionally biased region" description="Basic residues" evidence="2">
    <location>
        <begin position="1"/>
        <end position="10"/>
    </location>
</feature>
<feature type="compositionally biased region" description="Basic and acidic residues" evidence="2">
    <location>
        <begin position="17"/>
        <end position="32"/>
    </location>
</feature>
<feature type="compositionally biased region" description="Gly residues" evidence="2">
    <location>
        <begin position="40"/>
        <end position="53"/>
    </location>
</feature>
<feature type="compositionally biased region" description="Low complexity" evidence="2">
    <location>
        <begin position="54"/>
        <end position="65"/>
    </location>
</feature>
<feature type="compositionally biased region" description="Low complexity" evidence="2">
    <location>
        <begin position="73"/>
        <end position="89"/>
    </location>
</feature>
<feature type="active site" description="Proton acceptor">
    <location>
        <position position="442"/>
    </location>
</feature>
<feature type="binding site">
    <location>
        <begin position="520"/>
        <end position="532"/>
    </location>
    <ligand>
        <name>CoA</name>
        <dbReference type="ChEBI" id="CHEBI:57287"/>
    </ligand>
</feature>
<feature type="binding site">
    <location>
        <position position="558"/>
    </location>
    <ligand>
        <name>CoA</name>
        <dbReference type="ChEBI" id="CHEBI:57287"/>
    </ligand>
</feature>
<feature type="binding site">
    <location>
        <position position="659"/>
    </location>
    <ligand>
        <name>CoA</name>
        <dbReference type="ChEBI" id="CHEBI:57287"/>
    </ligand>
</feature>
<feature type="modified residue" description="Phosphoserine" evidence="1">
    <location>
        <position position="125"/>
    </location>
</feature>
<feature type="modified residue" description="Phosphoserine" evidence="1">
    <location>
        <position position="473"/>
    </location>
</feature>
<feature type="splice variant" id="VSP_000791" description="In isoform R." evidence="9 10">
    <location>
        <begin position="1"/>
        <end position="118"/>
    </location>
</feature>
<feature type="splice variant" id="VSP_000790" description="In isoform S." evidence="9">
    <original>MGLRTAKKRGLGGGGKWKREEGGGTRGRREVRPACFLQSGGRGDPGDVGGPAGNPGCSPHPRAATRPPPLPAHTPAHTPEWCGAASAEAAEPRRA</original>
    <variation>MWPECRDEALSTV</variation>
    <location>
        <begin position="1"/>
        <end position="95"/>
    </location>
</feature>
<feature type="sequence variant" id="VAR_046683" description="In dbSNP:rs3810948.">
    <original>D</original>
    <variation>E</variation>
    <location>
        <position position="47"/>
    </location>
</feature>
<feature type="sequence variant" id="VAR_011675" description="In dbSNP:rs3810950." evidence="3 6 7">
    <original>A</original>
    <variation>T</variation>
    <location>
        <position position="120"/>
    </location>
</feature>
<feature type="sequence variant" id="VAR_011666" description="In CMS6; impaired activity; dbSNP:rs121912820." evidence="3">
    <original>L</original>
    <variation>P</variation>
    <location>
        <position position="210"/>
    </location>
</feature>
<feature type="sequence variant" id="VAR_011667" description="In CMS6; impaired activity; dbSNP:rs121912815." evidence="3">
    <original>P</original>
    <variation>A</variation>
    <location>
        <position position="211"/>
    </location>
</feature>
<feature type="sequence variant" id="VAR_046684" description="In dbSNP:rs8178989.">
    <original>R</original>
    <variation>P</variation>
    <location>
        <position position="222"/>
    </location>
</feature>
<feature type="sequence variant" id="VAR_046685" description="In dbSNP:rs8178990.">
    <original>L</original>
    <variation>F</variation>
    <location>
        <position position="243"/>
    </location>
</feature>
<feature type="sequence variant" id="VAR_046686" description="In dbSNP:rs868749.">
    <original>P</original>
    <variation>L</variation>
    <location>
        <position position="299"/>
    </location>
</feature>
<feature type="sequence variant" id="VAR_011668" description="In CMS6; impaired activity; dbSNP:rs75466054." evidence="3">
    <original>I</original>
    <variation>T</variation>
    <location>
        <position position="305"/>
    </location>
</feature>
<feature type="sequence variant" id="VAR_038605" description="In CMS6; dbSNP:rs121912823." evidence="4">
    <original>I</original>
    <variation>T</variation>
    <location>
        <position position="336"/>
    </location>
</feature>
<feature type="sequence variant" id="VAR_011676" evidence="3 5">
    <original>A</original>
    <variation>G</variation>
    <location>
        <position position="392"/>
    </location>
</feature>
<feature type="sequence variant" id="VAR_046687" description="In dbSNP:rs8178991.">
    <original>D</original>
    <variation>N</variation>
    <location>
        <position position="400"/>
    </location>
</feature>
<feature type="sequence variant" id="VAR_011669" description="In CMS6; impaired activity; dbSNP:rs121912822." evidence="3">
    <original>R</original>
    <variation>C</variation>
    <location>
        <position position="420"/>
    </location>
</feature>
<feature type="sequence variant" id="VAR_011670" description="In CMS6; completely lack activity; dbSNP:rs121912816." evidence="3">
    <original>E</original>
    <variation>K</variation>
    <location>
        <position position="441"/>
    </location>
</feature>
<feature type="sequence variant" id="VAR_046688" description="In dbSNP:rs4838544." evidence="3 5 6 7">
    <original>V</original>
    <variation>M</variation>
    <location>
        <position position="461"/>
    </location>
</feature>
<feature type="sequence variant" id="VAR_011671" description="In CMS6; impaired activity; dbSNP:rs121912818." evidence="3">
    <original>R</original>
    <variation>G</variation>
    <location>
        <position position="482"/>
    </location>
</feature>
<feature type="sequence variant" id="VAR_011672" description="In CMS6; impaired activity; dbSNP:rs121912821." evidence="3">
    <original>S</original>
    <variation>L</variation>
    <location>
        <position position="498"/>
    </location>
</feature>
<feature type="sequence variant" id="VAR_011673" description="In CMS6; impaired activity; dbSNP:rs121912817." evidence="3">
    <original>V</original>
    <variation>L</variation>
    <location>
        <position position="506"/>
    </location>
</feature>
<feature type="sequence variant" id="VAR_011674" description="In CMS6; impaired activity; dbSNP:rs121912819." evidence="3">
    <original>R</original>
    <variation>H</variation>
    <location>
        <position position="560"/>
    </location>
</feature>
<feature type="sequence conflict" description="In Ref. 7; CAA39923." evidence="11" ref="7">
    <original>R</original>
    <variation>Q</variation>
    <location>
        <position position="151"/>
    </location>
</feature>
<feature type="sequence conflict" description="In Ref. 1; AAA14245." evidence="11" ref="1">
    <original>GQ</original>
    <variation>PE</variation>
    <location>
        <begin position="261"/>
        <end position="262"/>
    </location>
</feature>
<feature type="sequence conflict" description="In Ref. 6; AAB23557." evidence="11" ref="6">
    <original>V</original>
    <variation>L</variation>
    <location>
        <position position="396"/>
    </location>
</feature>
<feature type="sequence conflict" description="In Ref. 1; AAA14245." evidence="11" ref="1">
    <original>G</original>
    <variation>A</variation>
    <location>
        <position position="434"/>
    </location>
</feature>
<feature type="sequence conflict" description="In Ref. 6; AAB23557." evidence="11" ref="6">
    <original>C</original>
    <variation>S</variation>
    <location>
        <position position="529"/>
    </location>
</feature>
<feature type="sequence conflict" description="In Ref. 6; AAB23557." evidence="11" ref="6">
    <original>V</original>
    <variation>L</variation>
    <location>
        <position position="567"/>
    </location>
</feature>
<feature type="sequence conflict" description="In Ref. 6; AAB23557." evidence="11" ref="6">
    <original>EL</original>
    <variation>DV</variation>
    <location>
        <begin position="629"/>
        <end position="630"/>
    </location>
</feature>
<feature type="sequence conflict" description="In Ref. 6; AAB23557." evidence="11" ref="6">
    <original>T</original>
    <variation>M</variation>
    <location>
        <position position="664"/>
    </location>
</feature>
<feature type="helix" evidence="12">
    <location>
        <begin position="139"/>
        <end position="150"/>
    </location>
</feature>
<feature type="helix" evidence="12">
    <location>
        <begin position="151"/>
        <end position="153"/>
    </location>
</feature>
<feature type="helix" evidence="12">
    <location>
        <begin position="156"/>
        <end position="169"/>
    </location>
</feature>
<feature type="helix" evidence="12">
    <location>
        <begin position="175"/>
        <end position="189"/>
    </location>
</feature>
<feature type="strand" evidence="14">
    <location>
        <begin position="190"/>
        <end position="192"/>
    </location>
</feature>
<feature type="helix" evidence="12">
    <location>
        <begin position="195"/>
        <end position="202"/>
    </location>
</feature>
<feature type="turn" evidence="12">
    <location>
        <begin position="203"/>
        <end position="205"/>
    </location>
</feature>
<feature type="helix" evidence="12">
    <location>
        <begin position="210"/>
        <end position="213"/>
    </location>
</feature>
<feature type="strand" evidence="12">
    <location>
        <begin position="217"/>
        <end position="219"/>
    </location>
</feature>
<feature type="helix" evidence="12">
    <location>
        <begin position="228"/>
        <end position="250"/>
    </location>
</feature>
<feature type="turn" evidence="15">
    <location>
        <begin position="262"/>
        <end position="265"/>
    </location>
</feature>
<feature type="helix" evidence="12">
    <location>
        <begin position="271"/>
        <end position="275"/>
    </location>
</feature>
<feature type="strand" evidence="12">
    <location>
        <begin position="276"/>
        <end position="282"/>
    </location>
</feature>
<feature type="strand" evidence="12">
    <location>
        <begin position="285"/>
        <end position="287"/>
    </location>
</feature>
<feature type="strand" evidence="12">
    <location>
        <begin position="289"/>
        <end position="292"/>
    </location>
</feature>
<feature type="strand" evidence="12">
    <location>
        <begin position="300"/>
        <end position="308"/>
    </location>
</feature>
<feature type="strand" evidence="12">
    <location>
        <begin position="311"/>
        <end position="319"/>
    </location>
</feature>
<feature type="helix" evidence="12">
    <location>
        <begin position="326"/>
        <end position="340"/>
    </location>
</feature>
<feature type="helix" evidence="12">
    <location>
        <begin position="343"/>
        <end position="345"/>
    </location>
</feature>
<feature type="helix" evidence="12">
    <location>
        <begin position="350"/>
        <end position="355"/>
    </location>
</feature>
<feature type="helix" evidence="12">
    <location>
        <begin position="358"/>
        <end position="369"/>
    </location>
</feature>
<feature type="helix" evidence="12">
    <location>
        <begin position="372"/>
        <end position="382"/>
    </location>
</feature>
<feature type="strand" evidence="12">
    <location>
        <begin position="387"/>
        <end position="390"/>
    </location>
</feature>
<feature type="helix" evidence="12">
    <location>
        <begin position="400"/>
        <end position="409"/>
    </location>
</feature>
<feature type="turn" evidence="12">
    <location>
        <begin position="413"/>
        <end position="418"/>
    </location>
</feature>
<feature type="strand" evidence="12">
    <location>
        <begin position="424"/>
        <end position="430"/>
    </location>
</feature>
<feature type="strand" evidence="12">
    <location>
        <begin position="436"/>
        <end position="440"/>
    </location>
</feature>
<feature type="strand" evidence="13">
    <location>
        <begin position="442"/>
        <end position="444"/>
    </location>
</feature>
<feature type="helix" evidence="12">
    <location>
        <begin position="447"/>
        <end position="461"/>
    </location>
</feature>
<feature type="helix" evidence="12">
    <location>
        <begin position="489"/>
        <end position="508"/>
    </location>
</feature>
<feature type="strand" evidence="12">
    <location>
        <begin position="509"/>
        <end position="516"/>
    </location>
</feature>
<feature type="helix" evidence="12">
    <location>
        <begin position="521"/>
        <end position="525"/>
    </location>
</feature>
<feature type="turn" evidence="12">
    <location>
        <begin position="526"/>
        <end position="528"/>
    </location>
</feature>
<feature type="helix" evidence="12">
    <location>
        <begin position="531"/>
        <end position="547"/>
    </location>
</feature>
<feature type="strand" evidence="12">
    <location>
        <begin position="553"/>
        <end position="558"/>
    </location>
</feature>
<feature type="strand" evidence="12">
    <location>
        <begin position="567"/>
        <end position="569"/>
    </location>
</feature>
<feature type="helix" evidence="12">
    <location>
        <begin position="575"/>
        <end position="585"/>
    </location>
</feature>
<feature type="helix" evidence="12">
    <location>
        <begin position="587"/>
        <end position="589"/>
    </location>
</feature>
<feature type="helix" evidence="12">
    <location>
        <begin position="593"/>
        <end position="615"/>
    </location>
</feature>
<feature type="helix" evidence="12">
    <location>
        <begin position="621"/>
        <end position="634"/>
    </location>
</feature>
<feature type="helix" evidence="12">
    <location>
        <begin position="640"/>
        <end position="643"/>
    </location>
</feature>
<feature type="helix" evidence="12">
    <location>
        <begin position="645"/>
        <end position="650"/>
    </location>
</feature>
<feature type="strand" evidence="12">
    <location>
        <begin position="654"/>
        <end position="659"/>
    </location>
</feature>
<feature type="strand" evidence="12">
    <location>
        <begin position="663"/>
        <end position="665"/>
    </location>
</feature>
<feature type="strand" evidence="12">
    <location>
        <begin position="667"/>
        <end position="669"/>
    </location>
</feature>
<feature type="strand" evidence="12">
    <location>
        <begin position="678"/>
        <end position="684"/>
    </location>
</feature>
<feature type="strand" evidence="12">
    <location>
        <begin position="689"/>
        <end position="696"/>
    </location>
</feature>
<feature type="helix" evidence="12">
    <location>
        <begin position="704"/>
        <end position="722"/>
    </location>
</feature>
<proteinExistence type="evidence at protein level"/>
<dbReference type="EC" id="2.3.1.6" evidence="8"/>
<dbReference type="EMBL" id="S56138">
    <property type="protein sequence ID" value="AAA14245.1"/>
    <property type="molecule type" value="mRNA"/>
</dbReference>
<dbReference type="EMBL" id="AF305907">
    <property type="protein sequence ID" value="AAK08953.1"/>
    <property type="molecule type" value="mRNA"/>
</dbReference>
<dbReference type="EMBL" id="AF305906">
    <property type="protein sequence ID" value="AAK08950.1"/>
    <property type="molecule type" value="Genomic_DNA"/>
</dbReference>
<dbReference type="EMBL" id="AF305894">
    <property type="protein sequence ID" value="AAK08950.1"/>
    <property type="status" value="JOINED"/>
    <property type="molecule type" value="Genomic_DNA"/>
</dbReference>
<dbReference type="EMBL" id="AF305895">
    <property type="protein sequence ID" value="AAK08950.1"/>
    <property type="status" value="JOINED"/>
    <property type="molecule type" value="Genomic_DNA"/>
</dbReference>
<dbReference type="EMBL" id="AF305896">
    <property type="protein sequence ID" value="AAK08950.1"/>
    <property type="status" value="JOINED"/>
    <property type="molecule type" value="Genomic_DNA"/>
</dbReference>
<dbReference type="EMBL" id="AF305897">
    <property type="protein sequence ID" value="AAK08950.1"/>
    <property type="status" value="JOINED"/>
    <property type="molecule type" value="Genomic_DNA"/>
</dbReference>
<dbReference type="EMBL" id="AF305898">
    <property type="protein sequence ID" value="AAK08950.1"/>
    <property type="status" value="JOINED"/>
    <property type="molecule type" value="Genomic_DNA"/>
</dbReference>
<dbReference type="EMBL" id="AF305899">
    <property type="protein sequence ID" value="AAK08950.1"/>
    <property type="status" value="JOINED"/>
    <property type="molecule type" value="Genomic_DNA"/>
</dbReference>
<dbReference type="EMBL" id="AF305900">
    <property type="protein sequence ID" value="AAK08950.1"/>
    <property type="status" value="JOINED"/>
    <property type="molecule type" value="Genomic_DNA"/>
</dbReference>
<dbReference type="EMBL" id="AF305901">
    <property type="protein sequence ID" value="AAK08950.1"/>
    <property type="status" value="JOINED"/>
    <property type="molecule type" value="Genomic_DNA"/>
</dbReference>
<dbReference type="EMBL" id="AF305902">
    <property type="protein sequence ID" value="AAK08950.1"/>
    <property type="status" value="JOINED"/>
    <property type="molecule type" value="Genomic_DNA"/>
</dbReference>
<dbReference type="EMBL" id="AF305903">
    <property type="protein sequence ID" value="AAK08950.1"/>
    <property type="status" value="JOINED"/>
    <property type="molecule type" value="Genomic_DNA"/>
</dbReference>
<dbReference type="EMBL" id="AF305904">
    <property type="protein sequence ID" value="AAK08950.1"/>
    <property type="status" value="JOINED"/>
    <property type="molecule type" value="Genomic_DNA"/>
</dbReference>
<dbReference type="EMBL" id="AF305905">
    <property type="protein sequence ID" value="AAK08950.1"/>
    <property type="status" value="JOINED"/>
    <property type="molecule type" value="Genomic_DNA"/>
</dbReference>
<dbReference type="EMBL" id="AF305908">
    <property type="protein sequence ID" value="AAK08954.1"/>
    <property type="molecule type" value="mRNA"/>
</dbReference>
<dbReference type="EMBL" id="AF305906">
    <property type="protein sequence ID" value="AAK08951.1"/>
    <property type="molecule type" value="Genomic_DNA"/>
</dbReference>
<dbReference type="EMBL" id="AF305894">
    <property type="protein sequence ID" value="AAK08951.1"/>
    <property type="status" value="JOINED"/>
    <property type="molecule type" value="Genomic_DNA"/>
</dbReference>
<dbReference type="EMBL" id="AF305895">
    <property type="protein sequence ID" value="AAK08951.1"/>
    <property type="status" value="JOINED"/>
    <property type="molecule type" value="Genomic_DNA"/>
</dbReference>
<dbReference type="EMBL" id="AF305896">
    <property type="protein sequence ID" value="AAK08951.1"/>
    <property type="status" value="JOINED"/>
    <property type="molecule type" value="Genomic_DNA"/>
</dbReference>
<dbReference type="EMBL" id="AF305897">
    <property type="protein sequence ID" value="AAK08951.1"/>
    <property type="status" value="JOINED"/>
    <property type="molecule type" value="Genomic_DNA"/>
</dbReference>
<dbReference type="EMBL" id="AF305898">
    <property type="protein sequence ID" value="AAK08951.1"/>
    <property type="status" value="JOINED"/>
    <property type="molecule type" value="Genomic_DNA"/>
</dbReference>
<dbReference type="EMBL" id="AF305899">
    <property type="protein sequence ID" value="AAK08951.1"/>
    <property type="status" value="JOINED"/>
    <property type="molecule type" value="Genomic_DNA"/>
</dbReference>
<dbReference type="EMBL" id="AF305900">
    <property type="protein sequence ID" value="AAK08951.1"/>
    <property type="status" value="JOINED"/>
    <property type="molecule type" value="Genomic_DNA"/>
</dbReference>
<dbReference type="EMBL" id="AF305901">
    <property type="protein sequence ID" value="AAK08951.1"/>
    <property type="status" value="JOINED"/>
    <property type="molecule type" value="Genomic_DNA"/>
</dbReference>
<dbReference type="EMBL" id="AF305902">
    <property type="protein sequence ID" value="AAK08951.1"/>
    <property type="status" value="JOINED"/>
    <property type="molecule type" value="Genomic_DNA"/>
</dbReference>
<dbReference type="EMBL" id="AF305903">
    <property type="protein sequence ID" value="AAK08951.1"/>
    <property type="status" value="JOINED"/>
    <property type="molecule type" value="Genomic_DNA"/>
</dbReference>
<dbReference type="EMBL" id="AF305904">
    <property type="protein sequence ID" value="AAK08951.1"/>
    <property type="status" value="JOINED"/>
    <property type="molecule type" value="Genomic_DNA"/>
</dbReference>
<dbReference type="EMBL" id="AF305905">
    <property type="protein sequence ID" value="AAK08951.1"/>
    <property type="status" value="JOINED"/>
    <property type="molecule type" value="Genomic_DNA"/>
</dbReference>
<dbReference type="EMBL" id="AF305909">
    <property type="protein sequence ID" value="AAK08955.1"/>
    <property type="molecule type" value="mRNA"/>
</dbReference>
<dbReference type="EMBL" id="AF305906">
    <property type="protein sequence ID" value="AAK08952.1"/>
    <property type="molecule type" value="Genomic_DNA"/>
</dbReference>
<dbReference type="EMBL" id="AF305894">
    <property type="protein sequence ID" value="AAK08952.1"/>
    <property type="status" value="JOINED"/>
    <property type="molecule type" value="Genomic_DNA"/>
</dbReference>
<dbReference type="EMBL" id="AF305895">
    <property type="protein sequence ID" value="AAK08952.1"/>
    <property type="status" value="JOINED"/>
    <property type="molecule type" value="Genomic_DNA"/>
</dbReference>
<dbReference type="EMBL" id="AF305896">
    <property type="protein sequence ID" value="AAK08952.1"/>
    <property type="status" value="JOINED"/>
    <property type="molecule type" value="Genomic_DNA"/>
</dbReference>
<dbReference type="EMBL" id="AF305897">
    <property type="protein sequence ID" value="AAK08952.1"/>
    <property type="status" value="JOINED"/>
    <property type="molecule type" value="Genomic_DNA"/>
</dbReference>
<dbReference type="EMBL" id="AF305898">
    <property type="protein sequence ID" value="AAK08952.1"/>
    <property type="status" value="JOINED"/>
    <property type="molecule type" value="Genomic_DNA"/>
</dbReference>
<dbReference type="EMBL" id="AF305899">
    <property type="protein sequence ID" value="AAK08952.1"/>
    <property type="status" value="JOINED"/>
    <property type="molecule type" value="Genomic_DNA"/>
</dbReference>
<dbReference type="EMBL" id="AF305900">
    <property type="protein sequence ID" value="AAK08952.1"/>
    <property type="status" value="JOINED"/>
    <property type="molecule type" value="Genomic_DNA"/>
</dbReference>
<dbReference type="EMBL" id="AF305901">
    <property type="protein sequence ID" value="AAK08952.1"/>
    <property type="status" value="JOINED"/>
    <property type="molecule type" value="Genomic_DNA"/>
</dbReference>
<dbReference type="EMBL" id="AF305902">
    <property type="protein sequence ID" value="AAK08952.1"/>
    <property type="status" value="JOINED"/>
    <property type="molecule type" value="Genomic_DNA"/>
</dbReference>
<dbReference type="EMBL" id="AF305903">
    <property type="protein sequence ID" value="AAK08952.1"/>
    <property type="status" value="JOINED"/>
    <property type="molecule type" value="Genomic_DNA"/>
</dbReference>
<dbReference type="EMBL" id="AF305904">
    <property type="protein sequence ID" value="AAK08952.1"/>
    <property type="status" value="JOINED"/>
    <property type="molecule type" value="Genomic_DNA"/>
</dbReference>
<dbReference type="EMBL" id="AF305905">
    <property type="protein sequence ID" value="AAK08952.1"/>
    <property type="status" value="JOINED"/>
    <property type="molecule type" value="Genomic_DNA"/>
</dbReference>
<dbReference type="EMBL" id="AC073366">
    <property type="status" value="NOT_ANNOTATED_CDS"/>
    <property type="molecule type" value="Genomic_DNA"/>
</dbReference>
<dbReference type="EMBL" id="CH471187">
    <property type="protein sequence ID" value="EAW93086.1"/>
    <property type="molecule type" value="Genomic_DNA"/>
</dbReference>
<dbReference type="EMBL" id="BC130615">
    <property type="protein sequence ID" value="AAI30616.1"/>
    <property type="molecule type" value="mRNA"/>
</dbReference>
<dbReference type="EMBL" id="BC130617">
    <property type="protein sequence ID" value="AAI30618.1"/>
    <property type="molecule type" value="mRNA"/>
</dbReference>
<dbReference type="EMBL" id="S45018">
    <property type="protein sequence ID" value="AAB23557.2"/>
    <property type="molecule type" value="mRNA"/>
</dbReference>
<dbReference type="EMBL" id="X56585">
    <property type="protein sequence ID" value="CAA39923.1"/>
    <property type="molecule type" value="Genomic_DNA"/>
</dbReference>
<dbReference type="EMBL" id="X56879">
    <property type="protein sequence ID" value="CAA40201.1"/>
    <property type="molecule type" value="Genomic_DNA"/>
</dbReference>
<dbReference type="CCDS" id="CCDS44389.1">
    <molecule id="P28329-2"/>
</dbReference>
<dbReference type="CCDS" id="CCDS7232.1">
    <molecule id="P28329-1"/>
</dbReference>
<dbReference type="CCDS" id="CCDS7233.1">
    <molecule id="P28329-3"/>
</dbReference>
<dbReference type="PIR" id="I52631">
    <property type="entry name" value="A60202"/>
</dbReference>
<dbReference type="RefSeq" id="NP_001136401.2">
    <molecule id="P28329-3"/>
    <property type="nucleotide sequence ID" value="NM_001142929.2"/>
</dbReference>
<dbReference type="RefSeq" id="NP_001136405.2">
    <molecule id="P28329-2"/>
    <property type="nucleotide sequence ID" value="NM_001142933.2"/>
</dbReference>
<dbReference type="RefSeq" id="NP_001136406.2">
    <molecule id="P28329-3"/>
    <property type="nucleotide sequence ID" value="NM_001142934.2"/>
</dbReference>
<dbReference type="RefSeq" id="NP_065574.4">
    <molecule id="P28329-1"/>
    <property type="nucleotide sequence ID" value="NM_020549.5"/>
</dbReference>
<dbReference type="RefSeq" id="NP_066264.4">
    <molecule id="P28329-3"/>
    <property type="nucleotide sequence ID" value="NM_020984.4"/>
</dbReference>
<dbReference type="RefSeq" id="NP_066265.4">
    <molecule id="P28329-3"/>
    <property type="nucleotide sequence ID" value="NM_020985.4"/>
</dbReference>
<dbReference type="RefSeq" id="NP_066266.4">
    <molecule id="P28329-3"/>
    <property type="nucleotide sequence ID" value="NM_020986.4"/>
</dbReference>
<dbReference type="PDB" id="2FY2">
    <property type="method" value="X-ray"/>
    <property type="resolution" value="2.25 A"/>
    <property type="chains" value="A=120-733"/>
</dbReference>
<dbReference type="PDB" id="2FY3">
    <property type="method" value="X-ray"/>
    <property type="resolution" value="2.27 A"/>
    <property type="chains" value="A=120-733"/>
</dbReference>
<dbReference type="PDB" id="2FY4">
    <property type="method" value="X-ray"/>
    <property type="resolution" value="2.30 A"/>
    <property type="chains" value="A=120-733"/>
</dbReference>
<dbReference type="PDB" id="2FY5">
    <property type="method" value="X-ray"/>
    <property type="resolution" value="2.60 A"/>
    <property type="chains" value="A=120-733"/>
</dbReference>
<dbReference type="PDB" id="7AMD">
    <property type="method" value="X-ray"/>
    <property type="resolution" value="2.25 A"/>
    <property type="chains" value="A=120-733"/>
</dbReference>
<dbReference type="PDBsum" id="2FY2"/>
<dbReference type="PDBsum" id="2FY3"/>
<dbReference type="PDBsum" id="2FY4"/>
<dbReference type="PDBsum" id="2FY5"/>
<dbReference type="PDBsum" id="7AMD"/>
<dbReference type="SMR" id="P28329"/>
<dbReference type="BioGRID" id="107528">
    <property type="interactions" value="8"/>
</dbReference>
<dbReference type="FunCoup" id="P28329">
    <property type="interactions" value="784"/>
</dbReference>
<dbReference type="IntAct" id="P28329">
    <property type="interactions" value="104"/>
</dbReference>
<dbReference type="MINT" id="P28329"/>
<dbReference type="STRING" id="9606.ENSP00000337103"/>
<dbReference type="BindingDB" id="P28329"/>
<dbReference type="ChEMBL" id="CHEMBL4039"/>
<dbReference type="DrugBank" id="DB00122">
    <property type="generic name" value="Choline"/>
</dbReference>
<dbReference type="DrugBank" id="DB14006">
    <property type="generic name" value="Choline salicylate"/>
</dbReference>
<dbReference type="DrugBank" id="DB00184">
    <property type="generic name" value="Nicotine"/>
</dbReference>
<dbReference type="GlyCosmos" id="P28329">
    <property type="glycosylation" value="3 sites, 1 glycan"/>
</dbReference>
<dbReference type="GlyGen" id="P28329">
    <property type="glycosylation" value="3 sites, 1 O-linked glycan (3 sites)"/>
</dbReference>
<dbReference type="iPTMnet" id="P28329"/>
<dbReference type="PhosphoSitePlus" id="P28329"/>
<dbReference type="BioMuta" id="CHAT"/>
<dbReference type="DMDM" id="281185509"/>
<dbReference type="MassIVE" id="P28329"/>
<dbReference type="PaxDb" id="9606-ENSP00000337103"/>
<dbReference type="PeptideAtlas" id="P28329"/>
<dbReference type="ProteomicsDB" id="54466">
    <molecule id="P28329-1"/>
</dbReference>
<dbReference type="ProteomicsDB" id="54467">
    <molecule id="P28329-2"/>
</dbReference>
<dbReference type="ProteomicsDB" id="54468">
    <molecule id="P28329-3"/>
</dbReference>
<dbReference type="Antibodypedia" id="27616">
    <property type="antibodies" value="640 antibodies from 43 providers"/>
</dbReference>
<dbReference type="DNASU" id="1103"/>
<dbReference type="Ensembl" id="ENST00000337653.7">
    <molecule id="P28329-1"/>
    <property type="protein sequence ID" value="ENSP00000337103.2"/>
    <property type="gene ID" value="ENSG00000070748.19"/>
</dbReference>
<dbReference type="Ensembl" id="ENST00000339797.5">
    <molecule id="P28329-3"/>
    <property type="protein sequence ID" value="ENSP00000343486.1"/>
    <property type="gene ID" value="ENSG00000070748.19"/>
</dbReference>
<dbReference type="Ensembl" id="ENST00000351556.7">
    <molecule id="P28329-3"/>
    <property type="protein sequence ID" value="ENSP00000345878.3"/>
    <property type="gene ID" value="ENSG00000070748.19"/>
</dbReference>
<dbReference type="Ensembl" id="ENST00000395559.6">
    <molecule id="P28329-3"/>
    <property type="protein sequence ID" value="ENSP00000378926.2"/>
    <property type="gene ID" value="ENSG00000070748.19"/>
</dbReference>
<dbReference type="Ensembl" id="ENST00000395562.2">
    <molecule id="P28329-2"/>
    <property type="protein sequence ID" value="ENSP00000378929.2"/>
    <property type="gene ID" value="ENSG00000070748.19"/>
</dbReference>
<dbReference type="GeneID" id="1103"/>
<dbReference type="KEGG" id="hsa:1103"/>
<dbReference type="MANE-Select" id="ENST00000337653.7">
    <property type="protein sequence ID" value="ENSP00000337103.2"/>
    <property type="RefSeq nucleotide sequence ID" value="NM_020549.5"/>
    <property type="RefSeq protein sequence ID" value="NP_065574.4"/>
</dbReference>
<dbReference type="UCSC" id="uc001jhv.1">
    <molecule id="P28329-1"/>
    <property type="organism name" value="human"/>
</dbReference>
<dbReference type="AGR" id="HGNC:1912"/>
<dbReference type="CTD" id="1103"/>
<dbReference type="DisGeNET" id="1103"/>
<dbReference type="GeneCards" id="CHAT"/>
<dbReference type="GeneReviews" id="CHAT"/>
<dbReference type="HGNC" id="HGNC:1912">
    <property type="gene designation" value="CHAT"/>
</dbReference>
<dbReference type="HPA" id="ENSG00000070748">
    <property type="expression patterns" value="Tissue enhanced (brain, placenta)"/>
</dbReference>
<dbReference type="MalaCards" id="CHAT"/>
<dbReference type="MIM" id="118490">
    <property type="type" value="gene"/>
</dbReference>
<dbReference type="MIM" id="254210">
    <property type="type" value="phenotype"/>
</dbReference>
<dbReference type="neXtProt" id="NX_P28329"/>
<dbReference type="OpenTargets" id="ENSG00000070748"/>
<dbReference type="Orphanet" id="98914">
    <property type="disease" value="Presynaptic congenital myasthenic syndromes"/>
</dbReference>
<dbReference type="PharmGKB" id="PA26448"/>
<dbReference type="VEuPathDB" id="HostDB:ENSG00000070748"/>
<dbReference type="eggNOG" id="KOG3717">
    <property type="taxonomic scope" value="Eukaryota"/>
</dbReference>
<dbReference type="GeneTree" id="ENSGT01130000278297"/>
<dbReference type="HOGENOM" id="CLU_013513_3_0_1"/>
<dbReference type="InParanoid" id="P28329"/>
<dbReference type="OMA" id="FIKQQKC"/>
<dbReference type="OrthoDB" id="240216at2759"/>
<dbReference type="PAN-GO" id="P28329">
    <property type="GO annotations" value="5 GO annotations based on evolutionary models"/>
</dbReference>
<dbReference type="PhylomeDB" id="P28329"/>
<dbReference type="TreeFam" id="TF313836"/>
<dbReference type="BRENDA" id="2.3.1.6">
    <property type="organism ID" value="2681"/>
</dbReference>
<dbReference type="PathwayCommons" id="P28329"/>
<dbReference type="Reactome" id="R-HSA-1483191">
    <property type="pathway name" value="Synthesis of PC"/>
</dbReference>
<dbReference type="Reactome" id="R-HSA-264642">
    <property type="pathway name" value="Acetylcholine Neurotransmitter Release Cycle"/>
</dbReference>
<dbReference type="SABIO-RK" id="P28329"/>
<dbReference type="SignaLink" id="P28329"/>
<dbReference type="SIGNOR" id="P28329"/>
<dbReference type="BioGRID-ORCS" id="1103">
    <property type="hits" value="6 hits in 1143 CRISPR screens"/>
</dbReference>
<dbReference type="ChiTaRS" id="CHAT">
    <property type="organism name" value="human"/>
</dbReference>
<dbReference type="EvolutionaryTrace" id="P28329"/>
<dbReference type="GeneWiki" id="Choline_acetyltransferase"/>
<dbReference type="GenomeRNAi" id="1103"/>
<dbReference type="Pharos" id="P28329">
    <property type="development level" value="Tchem"/>
</dbReference>
<dbReference type="PRO" id="PR:P28329"/>
<dbReference type="Proteomes" id="UP000005640">
    <property type="component" value="Chromosome 10"/>
</dbReference>
<dbReference type="RNAct" id="P28329">
    <property type="molecule type" value="protein"/>
</dbReference>
<dbReference type="Bgee" id="ENSG00000070748">
    <property type="expression patterns" value="Expressed in primordial germ cell in gonad and 51 other cell types or tissues"/>
</dbReference>
<dbReference type="ExpressionAtlas" id="P28329">
    <property type="expression patterns" value="baseline and differential"/>
</dbReference>
<dbReference type="GO" id="GO:0005737">
    <property type="term" value="C:cytoplasm"/>
    <property type="evidence" value="ECO:0000318"/>
    <property type="project" value="GO_Central"/>
</dbReference>
<dbReference type="GO" id="GO:0005829">
    <property type="term" value="C:cytosol"/>
    <property type="evidence" value="ECO:0000304"/>
    <property type="project" value="Reactome"/>
</dbReference>
<dbReference type="GO" id="GO:0043005">
    <property type="term" value="C:neuron projection"/>
    <property type="evidence" value="ECO:0000318"/>
    <property type="project" value="GO_Central"/>
</dbReference>
<dbReference type="GO" id="GO:0005634">
    <property type="term" value="C:nucleus"/>
    <property type="evidence" value="ECO:0000304"/>
    <property type="project" value="ProtInc"/>
</dbReference>
<dbReference type="GO" id="GO:0045202">
    <property type="term" value="C:synapse"/>
    <property type="evidence" value="ECO:0007669"/>
    <property type="project" value="GOC"/>
</dbReference>
<dbReference type="GO" id="GO:0004102">
    <property type="term" value="F:choline O-acetyltransferase activity"/>
    <property type="evidence" value="ECO:0000318"/>
    <property type="project" value="GO_Central"/>
</dbReference>
<dbReference type="GO" id="GO:0008292">
    <property type="term" value="P:acetylcholine biosynthetic process"/>
    <property type="evidence" value="ECO:0000318"/>
    <property type="project" value="GO_Central"/>
</dbReference>
<dbReference type="GO" id="GO:0007274">
    <property type="term" value="P:neuromuscular synaptic transmission"/>
    <property type="evidence" value="ECO:0000318"/>
    <property type="project" value="GO_Central"/>
</dbReference>
<dbReference type="GO" id="GO:0006836">
    <property type="term" value="P:neurotransmitter transport"/>
    <property type="evidence" value="ECO:0000304"/>
    <property type="project" value="Reactome"/>
</dbReference>
<dbReference type="GO" id="GO:0006656">
    <property type="term" value="P:phosphatidylcholine biosynthetic process"/>
    <property type="evidence" value="ECO:0000304"/>
    <property type="project" value="Reactome"/>
</dbReference>
<dbReference type="FunFam" id="3.30.559.10:FF:000001">
    <property type="entry name" value="Carnitine O-acetyltransferase"/>
    <property type="match status" value="1"/>
</dbReference>
<dbReference type="FunFam" id="3.30.559.70:FF:000004">
    <property type="entry name" value="Choline O-acetyltransferase"/>
    <property type="match status" value="1"/>
</dbReference>
<dbReference type="Gene3D" id="3.30.559.10">
    <property type="entry name" value="Chloramphenicol acetyltransferase-like domain"/>
    <property type="match status" value="1"/>
</dbReference>
<dbReference type="Gene3D" id="3.30.559.70">
    <property type="entry name" value="Choline/Carnitine o-acyltransferase, domain 2"/>
    <property type="match status" value="1"/>
</dbReference>
<dbReference type="InterPro" id="IPR000542">
    <property type="entry name" value="Carn_acyl_trans"/>
</dbReference>
<dbReference type="InterPro" id="IPR023213">
    <property type="entry name" value="CAT-like_dom_sf"/>
</dbReference>
<dbReference type="InterPro" id="IPR039551">
    <property type="entry name" value="Cho/carn_acyl_trans"/>
</dbReference>
<dbReference type="InterPro" id="IPR042231">
    <property type="entry name" value="Cho/carn_acyl_trans_2"/>
</dbReference>
<dbReference type="PANTHER" id="PTHR22589">
    <property type="entry name" value="CARNITINE O-ACYLTRANSFERASE"/>
    <property type="match status" value="1"/>
</dbReference>
<dbReference type="PANTHER" id="PTHR22589:SF14">
    <property type="entry name" value="CHOLINE O-ACETYLTRANSFERASE"/>
    <property type="match status" value="1"/>
</dbReference>
<dbReference type="Pfam" id="PF00755">
    <property type="entry name" value="Carn_acyltransf"/>
    <property type="match status" value="1"/>
</dbReference>
<dbReference type="SUPFAM" id="SSF52777">
    <property type="entry name" value="CoA-dependent acyltransferases"/>
    <property type="match status" value="2"/>
</dbReference>
<dbReference type="PROSITE" id="PS00439">
    <property type="entry name" value="ACYLTRANSF_C_1"/>
    <property type="match status" value="1"/>
</dbReference>
<dbReference type="PROSITE" id="PS00440">
    <property type="entry name" value="ACYLTRANSF_C_2"/>
    <property type="match status" value="1"/>
</dbReference>
<name>CLAT_HUMAN</name>
<evidence type="ECO:0000250" key="1">
    <source>
        <dbReference type="UniProtKB" id="P32738"/>
    </source>
</evidence>
<evidence type="ECO:0000256" key="2">
    <source>
        <dbReference type="SAM" id="MobiDB-lite"/>
    </source>
</evidence>
<evidence type="ECO:0000269" key="3">
    <source>
    </source>
</evidence>
<evidence type="ECO:0000269" key="4">
    <source>
    </source>
</evidence>
<evidence type="ECO:0000269" key="5">
    <source>
    </source>
</evidence>
<evidence type="ECO:0000269" key="6">
    <source>
    </source>
</evidence>
<evidence type="ECO:0000269" key="7">
    <source>
    </source>
</evidence>
<evidence type="ECO:0000269" key="8">
    <source>
    </source>
</evidence>
<evidence type="ECO:0000303" key="9">
    <source>
    </source>
</evidence>
<evidence type="ECO:0000303" key="10">
    <source>
    </source>
</evidence>
<evidence type="ECO:0000305" key="11"/>
<evidence type="ECO:0007829" key="12">
    <source>
        <dbReference type="PDB" id="2FY2"/>
    </source>
</evidence>
<evidence type="ECO:0007829" key="13">
    <source>
        <dbReference type="PDB" id="2FY3"/>
    </source>
</evidence>
<evidence type="ECO:0007829" key="14">
    <source>
        <dbReference type="PDB" id="2FY5"/>
    </source>
</evidence>
<evidence type="ECO:0007829" key="15">
    <source>
        <dbReference type="PDB" id="7AMD"/>
    </source>
</evidence>
<sequence length="748" mass="82536">MGLRTAKKRGLGGGGKWKREEGGGTRGRREVRPACFLQSGGRGDPGDVGGPAGNPGCSPHPRAATRPPPLPAHTPAHTPEWCGAASAEAAEPRRAGPHLCIPAPGLTKTPILEKVPRKMAAKTPSSEESGLPKLPVPPLQQTLATYLQCMRHLVSEEQFRKSQAIVQQFGAPGGLGETLQQKLLERQEKTANWVSEYWLNDMYLNNRLALPVNSSPAVIFARQHFPGTDDQLRFAASLISGVLSYKALLDSHSIPTDCAKGQLSGQPLCMKQYYGLFSSYRLPGHTQDTLVAQNSSIMPEPEHVIVACCNQFFVLDVVINFRRLSEGDLFTQLRKIVKMASNEDERLPPIGLLTSDGRSEWAEARTVLVKDSTNRDSLDMIERCICLVCLDAPGGVELSDTHRALQLLHGGGYSKNGANRWYDKSLQFVVGRDGTCGVVCEHSPFDGIVLVQCTEHLLKHVTQSSRKLIRADSVSELPAPRRLRWKCSPEIQGHLASSAEKLQRIVKNLDFIVYKFDNYGKTFIKKQKCSPDAFIQVALQLAFYRLHRRLVPTYESASIRRFQEGRVDNIRSATPEALAFVRAVTDHKAAVPASEKLLLLKDAIRAQTAYTVMAITGMAIDNHLLALRELARAMCKELPEMFMDETYLMSNRFVLSTSQVPTTTEMFCCYGPVVPNGYGACYNPQPETILFCISSFHSCKETSSSKFAKAVEESLIDMRDLCSLLPPTESKPLATKEKATRPSQGHQP</sequence>
<gene>
    <name type="primary">CHAT</name>
</gene>